<sequence>MELLCCEGDTVRRAQPDPALLLDDRVLHNLLTVEERYLPQCSYFKCVQKDIQPFMRRMVATWMLEVCEEQRCEEEVFPMAMNYLDRFLAVIPTRKCHLQLLGAVCMFLASKLKETIPLTAEKLCIYTDNSIKPQELLEWELVVLGKLKWNLAAVTPHDFIEHILRKLPLPKDKLLLIRKHAQTFIALCATDFNFAMYPPSMIATGSVGAAICGLQLDVGETSLSGDSLTEHLAKITSTDVDCLKACQEQIESVLVSSLRQTRQQTQQRNSSKSVDELDQASTPTDVQDINL</sequence>
<proteinExistence type="evidence at transcript level"/>
<evidence type="ECO:0000250" key="1">
    <source>
        <dbReference type="UniProtKB" id="P24385"/>
    </source>
</evidence>
<evidence type="ECO:0000250" key="2">
    <source>
        <dbReference type="UniProtKB" id="P30279"/>
    </source>
</evidence>
<evidence type="ECO:0000250" key="3">
    <source>
        <dbReference type="UniProtKB" id="P30280"/>
    </source>
</evidence>
<evidence type="ECO:0000256" key="4">
    <source>
        <dbReference type="SAM" id="MobiDB-lite"/>
    </source>
</evidence>
<evidence type="ECO:0000305" key="5"/>
<dbReference type="EMBL" id="X89476">
    <property type="protein sequence ID" value="CAA61665.1"/>
    <property type="molecule type" value="mRNA"/>
</dbReference>
<dbReference type="EMBL" id="X83503">
    <property type="protein sequence ID" value="CAA58493.1"/>
    <property type="molecule type" value="mRNA"/>
</dbReference>
<dbReference type="PIR" id="S57925">
    <property type="entry name" value="S57925"/>
</dbReference>
<dbReference type="RefSeq" id="NP_001079130.1">
    <property type="nucleotide sequence ID" value="NM_001085661.1"/>
</dbReference>
<dbReference type="SMR" id="P53782"/>
<dbReference type="GeneID" id="373667"/>
<dbReference type="KEGG" id="xla:373667"/>
<dbReference type="AGR" id="Xenbase:XB-GENE-6252872"/>
<dbReference type="CTD" id="373667"/>
<dbReference type="Xenbase" id="XB-GENE-6252872">
    <property type="gene designation" value="ccnd2.L"/>
</dbReference>
<dbReference type="OMA" id="CLEMDTN"/>
<dbReference type="OrthoDB" id="306099at2759"/>
<dbReference type="Proteomes" id="UP000186698">
    <property type="component" value="Chromosome 3L"/>
</dbReference>
<dbReference type="Bgee" id="373667">
    <property type="expression patterns" value="Expressed in gastrula and 18 other cell types or tissues"/>
</dbReference>
<dbReference type="GO" id="GO:0000307">
    <property type="term" value="C:cyclin-dependent protein kinase holoenzyme complex"/>
    <property type="evidence" value="ECO:0000318"/>
    <property type="project" value="GO_Central"/>
</dbReference>
<dbReference type="GO" id="GO:0005737">
    <property type="term" value="C:cytoplasm"/>
    <property type="evidence" value="ECO:0000318"/>
    <property type="project" value="GO_Central"/>
</dbReference>
<dbReference type="GO" id="GO:0005815">
    <property type="term" value="C:microtubule organizing center"/>
    <property type="evidence" value="ECO:0000318"/>
    <property type="project" value="GO_Central"/>
</dbReference>
<dbReference type="GO" id="GO:0031965">
    <property type="term" value="C:nuclear membrane"/>
    <property type="evidence" value="ECO:0007669"/>
    <property type="project" value="UniProtKB-SubCell"/>
</dbReference>
<dbReference type="GO" id="GO:0005634">
    <property type="term" value="C:nucleus"/>
    <property type="evidence" value="ECO:0000318"/>
    <property type="project" value="GO_Central"/>
</dbReference>
<dbReference type="GO" id="GO:0016538">
    <property type="term" value="F:cyclin-dependent protein serine/threonine kinase regulator activity"/>
    <property type="evidence" value="ECO:0000318"/>
    <property type="project" value="GO_Central"/>
</dbReference>
<dbReference type="GO" id="GO:0051301">
    <property type="term" value="P:cell division"/>
    <property type="evidence" value="ECO:0007669"/>
    <property type="project" value="UniProtKB-KW"/>
</dbReference>
<dbReference type="GO" id="GO:0000082">
    <property type="term" value="P:G1/S transition of mitotic cell cycle"/>
    <property type="evidence" value="ECO:0000318"/>
    <property type="project" value="GO_Central"/>
</dbReference>
<dbReference type="GO" id="GO:1900087">
    <property type="term" value="P:positive regulation of G1/S transition of mitotic cell cycle"/>
    <property type="evidence" value="ECO:0000318"/>
    <property type="project" value="GO_Central"/>
</dbReference>
<dbReference type="CDD" id="cd20574">
    <property type="entry name" value="CYCLIN_CCND2_rpt1"/>
    <property type="match status" value="1"/>
</dbReference>
<dbReference type="CDD" id="cd20577">
    <property type="entry name" value="CYCLIN_CCND2_rpt2"/>
    <property type="match status" value="1"/>
</dbReference>
<dbReference type="FunFam" id="1.10.472.10:FF:000012">
    <property type="entry name" value="G1/S-specific cyclin-D1"/>
    <property type="match status" value="1"/>
</dbReference>
<dbReference type="FunFam" id="1.10.472.10:FF:000120">
    <property type="entry name" value="G1/S-specific cyclin-D1"/>
    <property type="match status" value="1"/>
</dbReference>
<dbReference type="Gene3D" id="1.10.472.10">
    <property type="entry name" value="Cyclin-like"/>
    <property type="match status" value="2"/>
</dbReference>
<dbReference type="InterPro" id="IPR039361">
    <property type="entry name" value="Cyclin"/>
</dbReference>
<dbReference type="InterPro" id="IPR013763">
    <property type="entry name" value="Cyclin-like_dom"/>
</dbReference>
<dbReference type="InterPro" id="IPR036915">
    <property type="entry name" value="Cyclin-like_sf"/>
</dbReference>
<dbReference type="InterPro" id="IPR046965">
    <property type="entry name" value="Cyclin_A/B-like"/>
</dbReference>
<dbReference type="InterPro" id="IPR004367">
    <property type="entry name" value="Cyclin_C-dom"/>
</dbReference>
<dbReference type="InterPro" id="IPR006671">
    <property type="entry name" value="Cyclin_N"/>
</dbReference>
<dbReference type="InterPro" id="IPR048258">
    <property type="entry name" value="Cyclins_cyclin-box"/>
</dbReference>
<dbReference type="PANTHER" id="PTHR10177">
    <property type="entry name" value="CYCLINS"/>
    <property type="match status" value="1"/>
</dbReference>
<dbReference type="Pfam" id="PF02984">
    <property type="entry name" value="Cyclin_C"/>
    <property type="match status" value="1"/>
</dbReference>
<dbReference type="Pfam" id="PF00134">
    <property type="entry name" value="Cyclin_N"/>
    <property type="match status" value="1"/>
</dbReference>
<dbReference type="PIRSF" id="PIRSF001771">
    <property type="entry name" value="Cyclin_A_B_D_E"/>
    <property type="match status" value="1"/>
</dbReference>
<dbReference type="SMART" id="SM00385">
    <property type="entry name" value="CYCLIN"/>
    <property type="match status" value="1"/>
</dbReference>
<dbReference type="SMART" id="SM01332">
    <property type="entry name" value="Cyclin_C"/>
    <property type="match status" value="1"/>
</dbReference>
<dbReference type="SUPFAM" id="SSF47954">
    <property type="entry name" value="Cyclin-like"/>
    <property type="match status" value="2"/>
</dbReference>
<dbReference type="PROSITE" id="PS00292">
    <property type="entry name" value="CYCLINS"/>
    <property type="match status" value="1"/>
</dbReference>
<feature type="chain" id="PRO_0000080441" description="G1/S-specific cyclin-D2">
    <location>
        <begin position="1"/>
        <end position="291"/>
    </location>
</feature>
<feature type="region of interest" description="Disordered" evidence="4">
    <location>
        <begin position="261"/>
        <end position="291"/>
    </location>
</feature>
<feature type="compositionally biased region" description="Polar residues" evidence="4">
    <location>
        <begin position="279"/>
        <end position="291"/>
    </location>
</feature>
<feature type="modified residue" description="Phosphothreonine" evidence="3">
    <location>
        <position position="282"/>
    </location>
</feature>
<organism>
    <name type="scientific">Xenopus laevis</name>
    <name type="common">African clawed frog</name>
    <dbReference type="NCBI Taxonomy" id="8355"/>
    <lineage>
        <taxon>Eukaryota</taxon>
        <taxon>Metazoa</taxon>
        <taxon>Chordata</taxon>
        <taxon>Craniata</taxon>
        <taxon>Vertebrata</taxon>
        <taxon>Euteleostomi</taxon>
        <taxon>Amphibia</taxon>
        <taxon>Batrachia</taxon>
        <taxon>Anura</taxon>
        <taxon>Pipoidea</taxon>
        <taxon>Pipidae</taxon>
        <taxon>Xenopodinae</taxon>
        <taxon>Xenopus</taxon>
        <taxon>Xenopus</taxon>
    </lineage>
</organism>
<protein>
    <recommendedName>
        <fullName>G1/S-specific cyclin-D2</fullName>
    </recommendedName>
</protein>
<reference key="1">
    <citation type="submission" date="1995-07" db="EMBL/GenBank/DDBJ databases">
        <authorList>
            <person name="Cockerill M.J."/>
            <person name="Hunt T."/>
        </authorList>
    </citation>
    <scope>NUCLEOTIDE SEQUENCE [MRNA]</scope>
</reference>
<reference key="2">
    <citation type="journal article" date="1996" name="Biol. Cell">
        <title>Xenopus cyclin D2: cloning and expression in oocytes and during early development.</title>
        <authorList>
            <person name="Taieb F."/>
            <person name="Jessus C."/>
        </authorList>
    </citation>
    <scope>NUCLEOTIDE SEQUENCE [MRNA]</scope>
</reference>
<comment type="function">
    <text evidence="2">Regulatory component of the cyclin D2-CDK4 (DC) complex that phosphorylates and inhibits members of the retinoblastoma (RB) protein family including RB1 and regulates the cell-cycle during G(1)/S transition. Phosphorylation of RB1 allows dissociation of the transcription factor E2F from the RB/E2F complex and the subsequent transcription of E2F target genes which are responsible for the progression through the G(1) phase. Hypophosphorylates RB1 in early G(1) phase. Cyclin D-CDK4 complexes are major integrators of various mitogenenic and antimitogenic signals.</text>
</comment>
<comment type="subunit">
    <text evidence="2">Interacts with the cdk4 and cdk6 protein kinases to form a serine/threonine kinase holoenzyme complex. The cyclin subunit imparts substrate specificity to the complex.</text>
</comment>
<comment type="subcellular location">
    <subcellularLocation>
        <location evidence="2">Nucleus</location>
    </subcellularLocation>
    <subcellularLocation>
        <location evidence="2">Cytoplasm</location>
    </subcellularLocation>
    <subcellularLocation>
        <location evidence="2">Nucleus membrane</location>
    </subcellularLocation>
    <text evidence="2">Cyclin D-CDK4 complexes accumulate at the nuclear membrane and are then translocated into the nucleus through interaction with KIP/CIP family members.</text>
</comment>
<comment type="PTM">
    <text evidence="1">Phosphorylation at Thr-282 by MAP kinases is required for ubiquitination and degradation by the DCX(AMBRA1) complex.</text>
</comment>
<comment type="PTM">
    <text evidence="3">Ubiquitinated by the DCX(AMBRA1) complex during the transition from G1 to S cell phase, leading to its degradation: ubiquitination is dependent on Thr-282 phosphorylation. The DCX(AMBRA1) complex represents the major regulator of CCND2 stability during the G1/S transition.</text>
</comment>
<comment type="similarity">
    <text evidence="5">Belongs to the cyclin family. Cyclin D subfamily.</text>
</comment>
<gene>
    <name type="primary">ccnd2</name>
</gene>
<name>CCND2_XENLA</name>
<accession>P53782</accession>
<keyword id="KW-0131">Cell cycle</keyword>
<keyword id="KW-0132">Cell division</keyword>
<keyword id="KW-0195">Cyclin</keyword>
<keyword id="KW-0963">Cytoplasm</keyword>
<keyword id="KW-0472">Membrane</keyword>
<keyword id="KW-0539">Nucleus</keyword>
<keyword id="KW-0597">Phosphoprotein</keyword>
<keyword id="KW-1185">Reference proteome</keyword>
<keyword id="KW-0832">Ubl conjugation</keyword>